<accession>P58573</accession>
<protein>
    <recommendedName>
        <fullName>Photosystem I reaction center subunit II</fullName>
    </recommendedName>
</protein>
<proteinExistence type="evidence at protein level"/>
<feature type="initiator methionine" description="Removed" evidence="1">
    <location>
        <position position="1"/>
    </location>
</feature>
<feature type="chain" id="PRO_0000206048" description="Photosystem I reaction center subunit II">
    <location>
        <begin position="2"/>
        <end position="139"/>
    </location>
</feature>
<feature type="helix" evidence="3">
    <location>
        <begin position="22"/>
        <end position="25"/>
    </location>
</feature>
<feature type="strand" evidence="3">
    <location>
        <begin position="28"/>
        <end position="37"/>
    </location>
</feature>
<feature type="strand" evidence="3">
    <location>
        <begin position="39"/>
        <end position="42"/>
    </location>
</feature>
<feature type="strand" evidence="3">
    <location>
        <begin position="46"/>
        <end position="51"/>
    </location>
</feature>
<feature type="strand" evidence="3">
    <location>
        <begin position="53"/>
        <end position="62"/>
    </location>
</feature>
<feature type="helix" evidence="3">
    <location>
        <begin position="63"/>
        <end position="72"/>
    </location>
</feature>
<feature type="turn" evidence="3">
    <location>
        <begin position="74"/>
        <end position="77"/>
    </location>
</feature>
<feature type="strand" evidence="3">
    <location>
        <begin position="82"/>
        <end position="86"/>
    </location>
</feature>
<feature type="strand" evidence="3">
    <location>
        <begin position="92"/>
        <end position="101"/>
    </location>
</feature>
<feature type="strand" evidence="3">
    <location>
        <begin position="114"/>
        <end position="118"/>
    </location>
</feature>
<feature type="helix" evidence="3">
    <location>
        <begin position="120"/>
        <end position="122"/>
    </location>
</feature>
<feature type="turn" evidence="3">
    <location>
        <begin position="126"/>
        <end position="128"/>
    </location>
</feature>
<comment type="function">
    <text>PsaD can form complexes with ferredoxin and ferredoxin-oxidoreductase in photosystem I (PS I) reaction center.</text>
</comment>
<comment type="subunit">
    <text evidence="1">The cyanobacterial PSI reaction center is composed of one copy each of PsaA,B,C,D,E,F,I,J,K,L,M and X, and forms dimeric and tetrameric complexes.</text>
</comment>
<comment type="subcellular location">
    <subcellularLocation>
        <location evidence="1">Cellular thylakoid membrane</location>
        <topology>Peripheral membrane protein</topology>
        <orientation>Cytoplasmic side</orientation>
    </subcellularLocation>
</comment>
<comment type="similarity">
    <text evidence="2">Belongs to the PsaD family.</text>
</comment>
<name>PSAD_NOSS1</name>
<dbReference type="EMBL" id="BA000019">
    <property type="protein sequence ID" value="BAB72287.1"/>
    <property type="molecule type" value="Genomic_DNA"/>
</dbReference>
<dbReference type="PIR" id="AH1847">
    <property type="entry name" value="AH1847"/>
</dbReference>
<dbReference type="RefSeq" id="WP_010994505.1">
    <property type="nucleotide sequence ID" value="NZ_RSCN01000039.1"/>
</dbReference>
<dbReference type="PDB" id="6JEO">
    <property type="method" value="EM"/>
    <property type="resolution" value="3.30 A"/>
    <property type="chains" value="aD/bD/cD/dD=1-139"/>
</dbReference>
<dbReference type="PDB" id="6K61">
    <property type="method" value="EM"/>
    <property type="resolution" value="2.37 A"/>
    <property type="chains" value="D/d=1-139"/>
</dbReference>
<dbReference type="PDB" id="6TCL">
    <property type="method" value="EM"/>
    <property type="resolution" value="3.20 A"/>
    <property type="chains" value="D/D1/D2/DD=5-138"/>
</dbReference>
<dbReference type="PDB" id="7Y3F">
    <property type="method" value="EM"/>
    <property type="resolution" value="2.62 A"/>
    <property type="chains" value="D=1-139"/>
</dbReference>
<dbReference type="PDBsum" id="6JEO"/>
<dbReference type="PDBsum" id="6K61"/>
<dbReference type="PDBsum" id="6TCL"/>
<dbReference type="PDBsum" id="7Y3F"/>
<dbReference type="EMDB" id="EMD-10461"/>
<dbReference type="EMDB" id="EMD-33593"/>
<dbReference type="EMDB" id="EMD-9807"/>
<dbReference type="EMDB" id="EMD-9918"/>
<dbReference type="SMR" id="P58573"/>
<dbReference type="STRING" id="103690.gene:10492337"/>
<dbReference type="KEGG" id="ana:all0329"/>
<dbReference type="eggNOG" id="ENOG502ZBN6">
    <property type="taxonomic scope" value="Bacteria"/>
</dbReference>
<dbReference type="OrthoDB" id="457155at2"/>
<dbReference type="Proteomes" id="UP000002483">
    <property type="component" value="Chromosome"/>
</dbReference>
<dbReference type="GO" id="GO:0009538">
    <property type="term" value="C:photosystem I reaction center"/>
    <property type="evidence" value="ECO:0007669"/>
    <property type="project" value="InterPro"/>
</dbReference>
<dbReference type="GO" id="GO:0031676">
    <property type="term" value="C:plasma membrane-derived thylakoid membrane"/>
    <property type="evidence" value="ECO:0007669"/>
    <property type="project" value="UniProtKB-SubCell"/>
</dbReference>
<dbReference type="GO" id="GO:0015979">
    <property type="term" value="P:photosynthesis"/>
    <property type="evidence" value="ECO:0007669"/>
    <property type="project" value="UniProtKB-KW"/>
</dbReference>
<dbReference type="Gene3D" id="3.30.1470.10">
    <property type="entry name" value="Photosystem I PsaD, reaction center subunit II"/>
    <property type="match status" value="1"/>
</dbReference>
<dbReference type="InterPro" id="IPR003685">
    <property type="entry name" value="PsaD"/>
</dbReference>
<dbReference type="InterPro" id="IPR036579">
    <property type="entry name" value="PsaD_sf"/>
</dbReference>
<dbReference type="PANTHER" id="PTHR31982:SF5">
    <property type="entry name" value="PHOTOSYSTEM I REACTION CENTER SUBUNIT II, CHLOROPLASTIC"/>
    <property type="match status" value="1"/>
</dbReference>
<dbReference type="PANTHER" id="PTHR31982">
    <property type="entry name" value="PHOTOSYSTEM I REACTION CENTER SUBUNIT II-1, CHLOROPLASTIC-RELATED"/>
    <property type="match status" value="1"/>
</dbReference>
<dbReference type="Pfam" id="PF02531">
    <property type="entry name" value="PsaD"/>
    <property type="match status" value="1"/>
</dbReference>
<dbReference type="SUPFAM" id="SSF64234">
    <property type="entry name" value="Photosystem I subunit PsaD"/>
    <property type="match status" value="1"/>
</dbReference>
<reference key="1">
    <citation type="journal article" date="2001" name="DNA Res.">
        <title>Complete genomic sequence of the filamentous nitrogen-fixing cyanobacterium Anabaena sp. strain PCC 7120.</title>
        <authorList>
            <person name="Kaneko T."/>
            <person name="Nakamura Y."/>
            <person name="Wolk C.P."/>
            <person name="Kuritz T."/>
            <person name="Sasamoto S."/>
            <person name="Watanabe A."/>
            <person name="Iriguchi M."/>
            <person name="Ishikawa A."/>
            <person name="Kawashima K."/>
            <person name="Kimura T."/>
            <person name="Kishida Y."/>
            <person name="Kohara M."/>
            <person name="Matsumoto M."/>
            <person name="Matsuno A."/>
            <person name="Muraki A."/>
            <person name="Nakazaki N."/>
            <person name="Shimpo S."/>
            <person name="Sugimoto M."/>
            <person name="Takazawa M."/>
            <person name="Yamada M."/>
            <person name="Yasuda M."/>
            <person name="Tabata S."/>
        </authorList>
    </citation>
    <scope>NUCLEOTIDE SEQUENCE [LARGE SCALE GENOMIC DNA]</scope>
    <source>
        <strain>PCC 7120 / SAG 25.82 / UTEX 2576</strain>
    </source>
</reference>
<reference key="2">
    <citation type="journal article" date="2014" name="Proc. Natl. Acad. Sci. U.S.A.">
        <title>Attachment of phycobilisomes in an antenna-photosystem I supercomplex of cyanobacteria.</title>
        <authorList>
            <person name="Watanabe M."/>
            <person name="Semchonok D.A."/>
            <person name="Webber-Birungi M.T."/>
            <person name="Ehira S."/>
            <person name="Kondo K."/>
            <person name="Narikawa R."/>
            <person name="Ohmori M."/>
            <person name="Boekema E.J."/>
            <person name="Ikeuchi M."/>
        </authorList>
    </citation>
    <scope>PROTEIN SEQUENCE OF 2-11</scope>
    <scope>SUBUNIT</scope>
    <scope>SUBCELLULAR LOCATION</scope>
    <source>
        <strain>PCC 7120 / SAG 25.82 / UTEX 2576</strain>
    </source>
</reference>
<sequence length="139" mass="15156">MAETLSGKTPLFAGSTGGLLTKAVEEEKYAITWTSPKAQVFELPTGGAATMHEGENLLYIARKEYGIALGGQLRKFKITNYKIYRILPSGETTFIHPADGVFPEKVNAGREKVRFNARSIGENPNPSQVKFSGKATYDA</sequence>
<gene>
    <name type="primary">psaD</name>
    <name type="ordered locus">all0329</name>
</gene>
<evidence type="ECO:0000269" key="1">
    <source>
    </source>
</evidence>
<evidence type="ECO:0000305" key="2"/>
<evidence type="ECO:0007829" key="3">
    <source>
        <dbReference type="PDB" id="6K61"/>
    </source>
</evidence>
<organism>
    <name type="scientific">Nostoc sp. (strain PCC 7120 / SAG 25.82 / UTEX 2576)</name>
    <dbReference type="NCBI Taxonomy" id="103690"/>
    <lineage>
        <taxon>Bacteria</taxon>
        <taxon>Bacillati</taxon>
        <taxon>Cyanobacteriota</taxon>
        <taxon>Cyanophyceae</taxon>
        <taxon>Nostocales</taxon>
        <taxon>Nostocaceae</taxon>
        <taxon>Nostoc</taxon>
    </lineage>
</organism>
<keyword id="KW-0002">3D-structure</keyword>
<keyword id="KW-0903">Direct protein sequencing</keyword>
<keyword id="KW-0472">Membrane</keyword>
<keyword id="KW-0602">Photosynthesis</keyword>
<keyword id="KW-0603">Photosystem I</keyword>
<keyword id="KW-1185">Reference proteome</keyword>
<keyword id="KW-0793">Thylakoid</keyword>